<organism>
    <name type="scientific">Vibrio vulnificus (strain CMCP6)</name>
    <dbReference type="NCBI Taxonomy" id="216895"/>
    <lineage>
        <taxon>Bacteria</taxon>
        <taxon>Pseudomonadati</taxon>
        <taxon>Pseudomonadota</taxon>
        <taxon>Gammaproteobacteria</taxon>
        <taxon>Vibrionales</taxon>
        <taxon>Vibrionaceae</taxon>
        <taxon>Vibrio</taxon>
    </lineage>
</organism>
<gene>
    <name evidence="1" type="primary">argR</name>
    <name type="ordered locus">VV1_0674</name>
</gene>
<dbReference type="EMBL" id="AE016795">
    <property type="protein sequence ID" value="AAO09186.1"/>
    <property type="molecule type" value="Genomic_DNA"/>
</dbReference>
<dbReference type="RefSeq" id="WP_011078752.1">
    <property type="nucleotide sequence ID" value="NC_004459.3"/>
</dbReference>
<dbReference type="SMR" id="Q8DEC1"/>
<dbReference type="GeneID" id="93894981"/>
<dbReference type="KEGG" id="vvu:VV1_0674"/>
<dbReference type="HOGENOM" id="CLU_097103_2_0_6"/>
<dbReference type="UniPathway" id="UPA00068"/>
<dbReference type="Proteomes" id="UP000002275">
    <property type="component" value="Chromosome 1"/>
</dbReference>
<dbReference type="GO" id="GO:0005737">
    <property type="term" value="C:cytoplasm"/>
    <property type="evidence" value="ECO:0007669"/>
    <property type="project" value="UniProtKB-SubCell"/>
</dbReference>
<dbReference type="GO" id="GO:0034618">
    <property type="term" value="F:arginine binding"/>
    <property type="evidence" value="ECO:0007669"/>
    <property type="project" value="InterPro"/>
</dbReference>
<dbReference type="GO" id="GO:0003677">
    <property type="term" value="F:DNA binding"/>
    <property type="evidence" value="ECO:0007669"/>
    <property type="project" value="UniProtKB-KW"/>
</dbReference>
<dbReference type="GO" id="GO:0003700">
    <property type="term" value="F:DNA-binding transcription factor activity"/>
    <property type="evidence" value="ECO:0007669"/>
    <property type="project" value="UniProtKB-UniRule"/>
</dbReference>
<dbReference type="GO" id="GO:0006526">
    <property type="term" value="P:L-arginine biosynthetic process"/>
    <property type="evidence" value="ECO:0007669"/>
    <property type="project" value="UniProtKB-UniPathway"/>
</dbReference>
<dbReference type="GO" id="GO:0051259">
    <property type="term" value="P:protein complex oligomerization"/>
    <property type="evidence" value="ECO:0007669"/>
    <property type="project" value="InterPro"/>
</dbReference>
<dbReference type="GO" id="GO:1900079">
    <property type="term" value="P:regulation of arginine biosynthetic process"/>
    <property type="evidence" value="ECO:0007669"/>
    <property type="project" value="UniProtKB-UniRule"/>
</dbReference>
<dbReference type="FunFam" id="1.10.10.10:FF:000074">
    <property type="entry name" value="Arginine repressor"/>
    <property type="match status" value="1"/>
</dbReference>
<dbReference type="Gene3D" id="3.30.1360.40">
    <property type="match status" value="1"/>
</dbReference>
<dbReference type="Gene3D" id="1.10.10.10">
    <property type="entry name" value="Winged helix-like DNA-binding domain superfamily/Winged helix DNA-binding domain"/>
    <property type="match status" value="1"/>
</dbReference>
<dbReference type="HAMAP" id="MF_00173">
    <property type="entry name" value="Arg_repressor"/>
    <property type="match status" value="1"/>
</dbReference>
<dbReference type="InterPro" id="IPR001669">
    <property type="entry name" value="Arg_repress"/>
</dbReference>
<dbReference type="InterPro" id="IPR020899">
    <property type="entry name" value="Arg_repress_C"/>
</dbReference>
<dbReference type="InterPro" id="IPR036251">
    <property type="entry name" value="Arg_repress_C_sf"/>
</dbReference>
<dbReference type="InterPro" id="IPR020900">
    <property type="entry name" value="Arg_repress_DNA-bd"/>
</dbReference>
<dbReference type="InterPro" id="IPR036388">
    <property type="entry name" value="WH-like_DNA-bd_sf"/>
</dbReference>
<dbReference type="InterPro" id="IPR036390">
    <property type="entry name" value="WH_DNA-bd_sf"/>
</dbReference>
<dbReference type="NCBIfam" id="TIGR01529">
    <property type="entry name" value="argR_whole"/>
    <property type="match status" value="1"/>
</dbReference>
<dbReference type="NCBIfam" id="NF003457">
    <property type="entry name" value="PRK05066.1"/>
    <property type="match status" value="1"/>
</dbReference>
<dbReference type="PANTHER" id="PTHR34471">
    <property type="entry name" value="ARGININE REPRESSOR"/>
    <property type="match status" value="1"/>
</dbReference>
<dbReference type="PANTHER" id="PTHR34471:SF1">
    <property type="entry name" value="ARGININE REPRESSOR"/>
    <property type="match status" value="1"/>
</dbReference>
<dbReference type="Pfam" id="PF01316">
    <property type="entry name" value="Arg_repressor"/>
    <property type="match status" value="1"/>
</dbReference>
<dbReference type="Pfam" id="PF02863">
    <property type="entry name" value="Arg_repressor_C"/>
    <property type="match status" value="1"/>
</dbReference>
<dbReference type="PRINTS" id="PR01467">
    <property type="entry name" value="ARGREPRESSOR"/>
</dbReference>
<dbReference type="SUPFAM" id="SSF55252">
    <property type="entry name" value="C-terminal domain of arginine repressor"/>
    <property type="match status" value="1"/>
</dbReference>
<dbReference type="SUPFAM" id="SSF46785">
    <property type="entry name" value="Winged helix' DNA-binding domain"/>
    <property type="match status" value="1"/>
</dbReference>
<feature type="chain" id="PRO_0000205141" description="Arginine repressor">
    <location>
        <begin position="1"/>
        <end position="156"/>
    </location>
</feature>
<comment type="function">
    <text evidence="1">Regulates arginine biosynthesis genes.</text>
</comment>
<comment type="pathway">
    <text>Amino-acid biosynthesis; L-arginine biosynthesis [regulation].</text>
</comment>
<comment type="subcellular location">
    <subcellularLocation>
        <location evidence="1">Cytoplasm</location>
    </subcellularLocation>
</comment>
<comment type="similarity">
    <text evidence="1">Belongs to the ArgR family.</text>
</comment>
<reference key="1">
    <citation type="submission" date="2002-12" db="EMBL/GenBank/DDBJ databases">
        <title>Complete genome sequence of Vibrio vulnificus CMCP6.</title>
        <authorList>
            <person name="Rhee J.H."/>
            <person name="Kim S.Y."/>
            <person name="Chung S.S."/>
            <person name="Kim J.J."/>
            <person name="Moon Y.H."/>
            <person name="Jeong H."/>
            <person name="Choy H.E."/>
        </authorList>
    </citation>
    <scope>NUCLEOTIDE SEQUENCE [LARGE SCALE GENOMIC DNA]</scope>
    <source>
        <strain>CMCP6</strain>
    </source>
</reference>
<protein>
    <recommendedName>
        <fullName evidence="1">Arginine repressor</fullName>
    </recommendedName>
</protein>
<accession>Q8DEC1</accession>
<sequence>MRPSEKQDNLVRAFKALLKEERFGSQGEIVEALKQEGFENINQSKVSRMLTKFGAVRTRNAKMEMVYCLPTELGVPTVSSSLRELVLDVDHNQALVVIHTGPGAAQLIARMLDSLGKSEGILGVVAGDDTIFITPTLTITTEQLFKSVCELFEYAG</sequence>
<evidence type="ECO:0000255" key="1">
    <source>
        <dbReference type="HAMAP-Rule" id="MF_00173"/>
    </source>
</evidence>
<proteinExistence type="inferred from homology"/>
<keyword id="KW-0028">Amino-acid biosynthesis</keyword>
<keyword id="KW-0055">Arginine biosynthesis</keyword>
<keyword id="KW-0963">Cytoplasm</keyword>
<keyword id="KW-0238">DNA-binding</keyword>
<keyword id="KW-0678">Repressor</keyword>
<keyword id="KW-0804">Transcription</keyword>
<keyword id="KW-0805">Transcription regulation</keyword>
<name>ARGR_VIBVU</name>